<reference key="1">
    <citation type="journal article" date="2002" name="Nucleic Acids Res.">
        <title>Genome sequence of Shigella flexneri 2a: insights into pathogenicity through comparison with genomes of Escherichia coli K12 and O157.</title>
        <authorList>
            <person name="Jin Q."/>
            <person name="Yuan Z."/>
            <person name="Xu J."/>
            <person name="Wang Y."/>
            <person name="Shen Y."/>
            <person name="Lu W."/>
            <person name="Wang J."/>
            <person name="Liu H."/>
            <person name="Yang J."/>
            <person name="Yang F."/>
            <person name="Zhang X."/>
            <person name="Zhang J."/>
            <person name="Yang G."/>
            <person name="Wu H."/>
            <person name="Qu D."/>
            <person name="Dong J."/>
            <person name="Sun L."/>
            <person name="Xue Y."/>
            <person name="Zhao A."/>
            <person name="Gao Y."/>
            <person name="Zhu J."/>
            <person name="Kan B."/>
            <person name="Ding K."/>
            <person name="Chen S."/>
            <person name="Cheng H."/>
            <person name="Yao Z."/>
            <person name="He B."/>
            <person name="Chen R."/>
            <person name="Ma D."/>
            <person name="Qiang B."/>
            <person name="Wen Y."/>
            <person name="Hou Y."/>
            <person name="Yu J."/>
        </authorList>
    </citation>
    <scope>NUCLEOTIDE SEQUENCE [LARGE SCALE GENOMIC DNA]</scope>
    <source>
        <strain>301 / Serotype 2a</strain>
    </source>
</reference>
<reference key="2">
    <citation type="journal article" date="2003" name="Infect. Immun.">
        <title>Complete genome sequence and comparative genomics of Shigella flexneri serotype 2a strain 2457T.</title>
        <authorList>
            <person name="Wei J."/>
            <person name="Goldberg M.B."/>
            <person name="Burland V."/>
            <person name="Venkatesan M.M."/>
            <person name="Deng W."/>
            <person name="Fournier G."/>
            <person name="Mayhew G.F."/>
            <person name="Plunkett G. III"/>
            <person name="Rose D.J."/>
            <person name="Darling A."/>
            <person name="Mau B."/>
            <person name="Perna N.T."/>
            <person name="Payne S.M."/>
            <person name="Runyen-Janecky L.J."/>
            <person name="Zhou S."/>
            <person name="Schwartz D.C."/>
            <person name="Blattner F.R."/>
        </authorList>
    </citation>
    <scope>NUCLEOTIDE SEQUENCE [LARGE SCALE GENOMIC DNA]</scope>
    <source>
        <strain>ATCC 700930 / 2457T / Serotype 2a</strain>
    </source>
</reference>
<comment type="catalytic activity">
    <reaction evidence="1">
        <text>D-erythro-1-(imidazol-4-yl)glycerol 3-phosphate = 3-(imidazol-4-yl)-2-oxopropyl phosphate + H2O</text>
        <dbReference type="Rhea" id="RHEA:11040"/>
        <dbReference type="ChEBI" id="CHEBI:15377"/>
        <dbReference type="ChEBI" id="CHEBI:57766"/>
        <dbReference type="ChEBI" id="CHEBI:58278"/>
        <dbReference type="EC" id="4.2.1.19"/>
    </reaction>
</comment>
<comment type="catalytic activity">
    <reaction evidence="1">
        <text>L-histidinol phosphate + H2O = L-histidinol + phosphate</text>
        <dbReference type="Rhea" id="RHEA:14465"/>
        <dbReference type="ChEBI" id="CHEBI:15377"/>
        <dbReference type="ChEBI" id="CHEBI:43474"/>
        <dbReference type="ChEBI" id="CHEBI:57699"/>
        <dbReference type="ChEBI" id="CHEBI:57980"/>
        <dbReference type="EC" id="3.1.3.15"/>
    </reaction>
</comment>
<comment type="cofactor">
    <cofactor evidence="1">
        <name>Mg(2+)</name>
        <dbReference type="ChEBI" id="CHEBI:18420"/>
    </cofactor>
</comment>
<comment type="cofactor">
    <cofactor evidence="1">
        <name>Zn(2+)</name>
        <dbReference type="ChEBI" id="CHEBI:29105"/>
    </cofactor>
</comment>
<comment type="pathway">
    <text evidence="1">Amino-acid biosynthesis; L-histidine biosynthesis; L-histidine from 5-phospho-alpha-D-ribose 1-diphosphate: step 6/9.</text>
</comment>
<comment type="pathway">
    <text evidence="1">Amino-acid biosynthesis; L-histidine biosynthesis; L-histidine from 5-phospho-alpha-D-ribose 1-diphosphate: step 8/9.</text>
</comment>
<comment type="subcellular location">
    <subcellularLocation>
        <location evidence="1">Cytoplasm</location>
    </subcellularLocation>
</comment>
<comment type="similarity">
    <text evidence="1">In the N-terminal section; belongs to the histidinol-phosphatase family.</text>
</comment>
<comment type="similarity">
    <text evidence="1">In the C-terminal section; belongs to the imidazoleglycerol-phosphate dehydratase family.</text>
</comment>
<evidence type="ECO:0000255" key="1">
    <source>
        <dbReference type="HAMAP-Rule" id="MF_01022"/>
    </source>
</evidence>
<proteinExistence type="inferred from homology"/>
<protein>
    <recommendedName>
        <fullName evidence="1">Histidine biosynthesis bifunctional protein HisB</fullName>
    </recommendedName>
    <domain>
        <recommendedName>
            <fullName evidence="1">Histidinol-phosphatase</fullName>
            <ecNumber evidence="1">3.1.3.15</ecNumber>
        </recommendedName>
    </domain>
    <domain>
        <recommendedName>
            <fullName evidence="1">Imidazoleglycerol-phosphate dehydratase</fullName>
            <shortName evidence="1">IGPD</shortName>
            <ecNumber evidence="1">4.2.1.19</ecNumber>
        </recommendedName>
    </domain>
</protein>
<sequence>MSQKYLFIDRDGTLISEPPSDFQVDRFDKLAFEPGVIPELLKLQKAGYKLVMITNQDGLGTQSFPQADFDGPHNLMMQIFTSQGVQFDEVLICPHLPADECDCRKPKVKLVEGYLAEQAMDRANSYVIGDRATDIQLAENMGINGLRYDRETLNWPMIGEQLTKRDRYAHVVRNTKETQIDVQVWLDREGGSKINTGVGFFDHMLDQIATHGGFRMEINVKGDLYIDDHHTVEDTGLALGEALKIALGDKRGICRFGFVLPMDECLARCALDISGRPHLEYKAEFTYQRVGDLSTEMIEHFFRSLSYTMGVTLHLKTKGKNDHHRVESLFKAFGRTLRQAIRVEGDTLPSSKGVL</sequence>
<accession>Q83R05</accession>
<accession>Q7UCB8</accession>
<gene>
    <name evidence="1" type="primary">hisB</name>
    <name type="ordered locus">SF2084</name>
    <name type="ordered locus">S2205</name>
</gene>
<name>HIS7_SHIFL</name>
<keyword id="KW-0028">Amino-acid biosynthesis</keyword>
<keyword id="KW-0963">Cytoplasm</keyword>
<keyword id="KW-0368">Histidine biosynthesis</keyword>
<keyword id="KW-0378">Hydrolase</keyword>
<keyword id="KW-0456">Lyase</keyword>
<keyword id="KW-0460">Magnesium</keyword>
<keyword id="KW-0479">Metal-binding</keyword>
<keyword id="KW-0511">Multifunctional enzyme</keyword>
<keyword id="KW-1185">Reference proteome</keyword>
<keyword id="KW-0862">Zinc</keyword>
<feature type="chain" id="PRO_0000158222" description="Histidine biosynthesis bifunctional protein HisB">
    <location>
        <begin position="1"/>
        <end position="355"/>
    </location>
</feature>
<feature type="region of interest" description="Histidinol-phosphatase" evidence="1">
    <location>
        <begin position="1"/>
        <end position="166"/>
    </location>
</feature>
<feature type="region of interest" description="Imidazoleglycerol-phosphate dehydratase" evidence="1">
    <location>
        <begin position="167"/>
        <end position="355"/>
    </location>
</feature>
<feature type="active site" description="Nucleophile" evidence="1">
    <location>
        <position position="9"/>
    </location>
</feature>
<feature type="active site" description="Proton donor" evidence="1">
    <location>
        <position position="11"/>
    </location>
</feature>
<feature type="binding site" evidence="1">
    <location>
        <position position="9"/>
    </location>
    <ligand>
        <name>Mg(2+)</name>
        <dbReference type="ChEBI" id="CHEBI:18420"/>
    </ligand>
</feature>
<feature type="binding site" evidence="1">
    <location>
        <position position="11"/>
    </location>
    <ligand>
        <name>Mg(2+)</name>
        <dbReference type="ChEBI" id="CHEBI:18420"/>
    </ligand>
</feature>
<feature type="binding site" evidence="1">
    <location>
        <position position="93"/>
    </location>
    <ligand>
        <name>Zn(2+)</name>
        <dbReference type="ChEBI" id="CHEBI:29105"/>
    </ligand>
</feature>
<feature type="binding site" evidence="1">
    <location>
        <position position="95"/>
    </location>
    <ligand>
        <name>Zn(2+)</name>
        <dbReference type="ChEBI" id="CHEBI:29105"/>
    </ligand>
</feature>
<feature type="binding site" evidence="1">
    <location>
        <position position="101"/>
    </location>
    <ligand>
        <name>Zn(2+)</name>
        <dbReference type="ChEBI" id="CHEBI:29105"/>
    </ligand>
</feature>
<feature type="binding site" evidence="1">
    <location>
        <position position="103"/>
    </location>
    <ligand>
        <name>Zn(2+)</name>
        <dbReference type="ChEBI" id="CHEBI:29105"/>
    </ligand>
</feature>
<feature type="binding site" evidence="1">
    <location>
        <position position="130"/>
    </location>
    <ligand>
        <name>Mg(2+)</name>
        <dbReference type="ChEBI" id="CHEBI:18420"/>
    </ligand>
</feature>
<dbReference type="EC" id="3.1.3.15" evidence="1"/>
<dbReference type="EC" id="4.2.1.19" evidence="1"/>
<dbReference type="EMBL" id="AE005674">
    <property type="protein sequence ID" value="AAN43624.2"/>
    <property type="molecule type" value="Genomic_DNA"/>
</dbReference>
<dbReference type="EMBL" id="AE014073">
    <property type="protein sequence ID" value="AAP17452.1"/>
    <property type="molecule type" value="Genomic_DNA"/>
</dbReference>
<dbReference type="RefSeq" id="NP_707917.2">
    <property type="nucleotide sequence ID" value="NC_004337.2"/>
</dbReference>
<dbReference type="RefSeq" id="WP_000080068.1">
    <property type="nucleotide sequence ID" value="NZ_WPGW01000112.1"/>
</dbReference>
<dbReference type="SMR" id="Q83R05"/>
<dbReference type="STRING" id="198214.SF2084"/>
<dbReference type="PaxDb" id="198214-SF2084"/>
<dbReference type="GeneID" id="1025893"/>
<dbReference type="GeneID" id="86946976"/>
<dbReference type="KEGG" id="sfl:SF2084"/>
<dbReference type="KEGG" id="sfx:S2205"/>
<dbReference type="PATRIC" id="fig|198214.7.peg.2493"/>
<dbReference type="HOGENOM" id="CLU_044308_0_0_6"/>
<dbReference type="UniPathway" id="UPA00031">
    <property type="reaction ID" value="UER00011"/>
</dbReference>
<dbReference type="UniPathway" id="UPA00031">
    <property type="reaction ID" value="UER00013"/>
</dbReference>
<dbReference type="Proteomes" id="UP000001006">
    <property type="component" value="Chromosome"/>
</dbReference>
<dbReference type="Proteomes" id="UP000002673">
    <property type="component" value="Chromosome"/>
</dbReference>
<dbReference type="GO" id="GO:0005737">
    <property type="term" value="C:cytoplasm"/>
    <property type="evidence" value="ECO:0007669"/>
    <property type="project" value="UniProtKB-SubCell"/>
</dbReference>
<dbReference type="GO" id="GO:0004401">
    <property type="term" value="F:histidinol-phosphatase activity"/>
    <property type="evidence" value="ECO:0007669"/>
    <property type="project" value="UniProtKB-UniRule"/>
</dbReference>
<dbReference type="GO" id="GO:0004424">
    <property type="term" value="F:imidazoleglycerol-phosphate dehydratase activity"/>
    <property type="evidence" value="ECO:0007669"/>
    <property type="project" value="UniProtKB-UniRule"/>
</dbReference>
<dbReference type="GO" id="GO:0046872">
    <property type="term" value="F:metal ion binding"/>
    <property type="evidence" value="ECO:0007669"/>
    <property type="project" value="UniProtKB-KW"/>
</dbReference>
<dbReference type="GO" id="GO:0000105">
    <property type="term" value="P:L-histidine biosynthetic process"/>
    <property type="evidence" value="ECO:0007669"/>
    <property type="project" value="UniProtKB-UniRule"/>
</dbReference>
<dbReference type="CDD" id="cd07503">
    <property type="entry name" value="HAD_HisB-N"/>
    <property type="match status" value="1"/>
</dbReference>
<dbReference type="CDD" id="cd07914">
    <property type="entry name" value="IGPD"/>
    <property type="match status" value="1"/>
</dbReference>
<dbReference type="FunFam" id="3.40.50.1000:FF:000061">
    <property type="entry name" value="Histidine biosynthesis bifunctional protein HisB"/>
    <property type="match status" value="1"/>
</dbReference>
<dbReference type="FunFam" id="3.30.230.40:FF:000001">
    <property type="entry name" value="Imidazoleglycerol-phosphate dehydratase HisB"/>
    <property type="match status" value="1"/>
</dbReference>
<dbReference type="FunFam" id="3.30.230.40:FF:000003">
    <property type="entry name" value="Imidazoleglycerol-phosphate dehydratase HisB"/>
    <property type="match status" value="1"/>
</dbReference>
<dbReference type="Gene3D" id="3.40.50.1000">
    <property type="entry name" value="HAD superfamily/HAD-like"/>
    <property type="match status" value="1"/>
</dbReference>
<dbReference type="Gene3D" id="3.30.230.40">
    <property type="entry name" value="Imidazole glycerol phosphate dehydratase, domain 1"/>
    <property type="match status" value="2"/>
</dbReference>
<dbReference type="HAMAP" id="MF_01022">
    <property type="entry name" value="Bifunc_HisB"/>
    <property type="match status" value="1"/>
</dbReference>
<dbReference type="HAMAP" id="MF_00076">
    <property type="entry name" value="HisB"/>
    <property type="match status" value="1"/>
</dbReference>
<dbReference type="InterPro" id="IPR036412">
    <property type="entry name" value="HAD-like_sf"/>
</dbReference>
<dbReference type="InterPro" id="IPR006549">
    <property type="entry name" value="HAD-SF_hydro_IIIA"/>
</dbReference>
<dbReference type="InterPro" id="IPR023214">
    <property type="entry name" value="HAD_sf"/>
</dbReference>
<dbReference type="InterPro" id="IPR020566">
    <property type="entry name" value="His_synth_bifunc_HisB"/>
</dbReference>
<dbReference type="InterPro" id="IPR005954">
    <property type="entry name" value="HisB_N"/>
</dbReference>
<dbReference type="InterPro" id="IPR006543">
    <property type="entry name" value="Histidinol-phos"/>
</dbReference>
<dbReference type="InterPro" id="IPR038494">
    <property type="entry name" value="IGPD_sf"/>
</dbReference>
<dbReference type="InterPro" id="IPR000807">
    <property type="entry name" value="ImidazoleglycerolP_deHydtase"/>
</dbReference>
<dbReference type="InterPro" id="IPR020565">
    <property type="entry name" value="ImidazoleglycerP_deHydtase_CS"/>
</dbReference>
<dbReference type="InterPro" id="IPR020568">
    <property type="entry name" value="Ribosomal_Su5_D2-typ_SF"/>
</dbReference>
<dbReference type="NCBIfam" id="TIGR01662">
    <property type="entry name" value="HAD-SF-IIIA"/>
    <property type="match status" value="1"/>
</dbReference>
<dbReference type="NCBIfam" id="TIGR01261">
    <property type="entry name" value="hisB_Nterm"/>
    <property type="match status" value="1"/>
</dbReference>
<dbReference type="NCBIfam" id="TIGR01656">
    <property type="entry name" value="Histidinol-ppas"/>
    <property type="match status" value="1"/>
</dbReference>
<dbReference type="NCBIfam" id="NF002111">
    <property type="entry name" value="PRK00951.2-1"/>
    <property type="match status" value="1"/>
</dbReference>
<dbReference type="NCBIfam" id="NF002114">
    <property type="entry name" value="PRK00951.2-4"/>
    <property type="match status" value="1"/>
</dbReference>
<dbReference type="NCBIfam" id="NF003937">
    <property type="entry name" value="PRK05446.1"/>
    <property type="match status" value="1"/>
</dbReference>
<dbReference type="PANTHER" id="PTHR23133:SF2">
    <property type="entry name" value="IMIDAZOLEGLYCEROL-PHOSPHATE DEHYDRATASE"/>
    <property type="match status" value="1"/>
</dbReference>
<dbReference type="PANTHER" id="PTHR23133">
    <property type="entry name" value="IMIDAZOLEGLYCEROL-PHOSPHATE DEHYDRATASE HIS7"/>
    <property type="match status" value="1"/>
</dbReference>
<dbReference type="Pfam" id="PF13242">
    <property type="entry name" value="Hydrolase_like"/>
    <property type="match status" value="1"/>
</dbReference>
<dbReference type="Pfam" id="PF00475">
    <property type="entry name" value="IGPD"/>
    <property type="match status" value="1"/>
</dbReference>
<dbReference type="SFLD" id="SFLDG01129">
    <property type="entry name" value="C1.5:_HAD__Beta-PGM__Phosphata"/>
    <property type="match status" value="1"/>
</dbReference>
<dbReference type="SFLD" id="SFLDF00028">
    <property type="entry name" value="histidinol-phosphatase"/>
    <property type="match status" value="1"/>
</dbReference>
<dbReference type="SUPFAM" id="SSF56784">
    <property type="entry name" value="HAD-like"/>
    <property type="match status" value="1"/>
</dbReference>
<dbReference type="SUPFAM" id="SSF54211">
    <property type="entry name" value="Ribosomal protein S5 domain 2-like"/>
    <property type="match status" value="2"/>
</dbReference>
<dbReference type="PROSITE" id="PS00954">
    <property type="entry name" value="IGP_DEHYDRATASE_1"/>
    <property type="match status" value="1"/>
</dbReference>
<dbReference type="PROSITE" id="PS00955">
    <property type="entry name" value="IGP_DEHYDRATASE_2"/>
    <property type="match status" value="1"/>
</dbReference>
<organism>
    <name type="scientific">Shigella flexneri</name>
    <dbReference type="NCBI Taxonomy" id="623"/>
    <lineage>
        <taxon>Bacteria</taxon>
        <taxon>Pseudomonadati</taxon>
        <taxon>Pseudomonadota</taxon>
        <taxon>Gammaproteobacteria</taxon>
        <taxon>Enterobacterales</taxon>
        <taxon>Enterobacteriaceae</taxon>
        <taxon>Shigella</taxon>
    </lineage>
</organism>